<name>RBMX_MACFA</name>
<gene>
    <name type="primary">RBMX</name>
    <name type="synonym">HNRPG</name>
    <name type="synonym">RBMXP1</name>
    <name type="ORF">QtsA-15489</name>
</gene>
<protein>
    <recommendedName>
        <fullName>RNA-binding motif protein, X chromosome</fullName>
    </recommendedName>
    <alternativeName>
        <fullName>Heterogeneous nuclear ribonucleoprotein G</fullName>
        <shortName>hnRNP G</shortName>
    </alternativeName>
    <component>
        <recommendedName>
            <fullName>RNA-binding motif protein, X chromosome, N-terminally processed</fullName>
        </recommendedName>
    </component>
</protein>
<dbReference type="EMBL" id="AB168869">
    <property type="protein sequence ID" value="BAE00972.1"/>
    <property type="molecule type" value="mRNA"/>
</dbReference>
<dbReference type="RefSeq" id="NP_001270702.1">
    <property type="nucleotide sequence ID" value="NM_001283773.1"/>
</dbReference>
<dbReference type="RefSeq" id="XP_015299206.1">
    <property type="nucleotide sequence ID" value="XM_015443720.1"/>
</dbReference>
<dbReference type="RefSeq" id="XP_015299207.1">
    <property type="nucleotide sequence ID" value="XM_015443721.3"/>
</dbReference>
<dbReference type="BMRB" id="Q4R7F0"/>
<dbReference type="SMR" id="Q4R7F0"/>
<dbReference type="STRING" id="9541.ENSMFAP00000019037"/>
<dbReference type="Ensembl" id="ENSMFAT00000069585.2">
    <property type="protein sequence ID" value="ENSMFAP00000019037.1"/>
    <property type="gene ID" value="ENSMFAG00000032479.2"/>
</dbReference>
<dbReference type="GeneID" id="101864797"/>
<dbReference type="KEGG" id="mcf:101864797"/>
<dbReference type="CTD" id="27316"/>
<dbReference type="VEuPathDB" id="HostDB:ENSMFAG00000032479"/>
<dbReference type="eggNOG" id="ENOG502QS9N">
    <property type="taxonomic scope" value="Eukaryota"/>
</dbReference>
<dbReference type="GeneTree" id="ENSGT00940000153425"/>
<dbReference type="OMA" id="HEGFFMG"/>
<dbReference type="OrthoDB" id="17664at314294"/>
<dbReference type="Proteomes" id="UP000233100">
    <property type="component" value="Chromosome X"/>
</dbReference>
<dbReference type="Bgee" id="ENSMFAG00000032479">
    <property type="expression patterns" value="Expressed in thymus and 13 other cell types or tissues"/>
</dbReference>
<dbReference type="GO" id="GO:0071013">
    <property type="term" value="C:catalytic step 2 spliceosome"/>
    <property type="evidence" value="ECO:0000250"/>
    <property type="project" value="UniProtKB"/>
</dbReference>
<dbReference type="GO" id="GO:0000791">
    <property type="term" value="C:euchromatin"/>
    <property type="evidence" value="ECO:0000250"/>
    <property type="project" value="UniProtKB"/>
</dbReference>
<dbReference type="GO" id="GO:0070062">
    <property type="term" value="C:extracellular exosome"/>
    <property type="evidence" value="ECO:0000250"/>
    <property type="project" value="UniProtKB"/>
</dbReference>
<dbReference type="GO" id="GO:0005634">
    <property type="term" value="C:nucleus"/>
    <property type="evidence" value="ECO:0000250"/>
    <property type="project" value="UniProtKB"/>
</dbReference>
<dbReference type="GO" id="GO:0044530">
    <property type="term" value="C:supraspliceosomal complex"/>
    <property type="evidence" value="ECO:0000250"/>
    <property type="project" value="UniProtKB"/>
</dbReference>
<dbReference type="GO" id="GO:0003682">
    <property type="term" value="F:chromatin binding"/>
    <property type="evidence" value="ECO:0000250"/>
    <property type="project" value="UniProtKB"/>
</dbReference>
<dbReference type="GO" id="GO:0042802">
    <property type="term" value="F:identical protein binding"/>
    <property type="evidence" value="ECO:0007669"/>
    <property type="project" value="Ensembl"/>
</dbReference>
<dbReference type="GO" id="GO:0003729">
    <property type="term" value="F:mRNA binding"/>
    <property type="evidence" value="ECO:0000250"/>
    <property type="project" value="UniProtKB"/>
</dbReference>
<dbReference type="GO" id="GO:0019904">
    <property type="term" value="F:protein domain specific binding"/>
    <property type="evidence" value="ECO:0007669"/>
    <property type="project" value="Ensembl"/>
</dbReference>
<dbReference type="GO" id="GO:0003723">
    <property type="term" value="F:RNA binding"/>
    <property type="evidence" value="ECO:0000250"/>
    <property type="project" value="UniProtKB"/>
</dbReference>
<dbReference type="GO" id="GO:0000978">
    <property type="term" value="F:RNA polymerase II cis-regulatory region sequence-specific DNA binding"/>
    <property type="evidence" value="ECO:0000250"/>
    <property type="project" value="UniProtKB"/>
</dbReference>
<dbReference type="GO" id="GO:0071347">
    <property type="term" value="P:cellular response to interleukin-1"/>
    <property type="evidence" value="ECO:0000250"/>
    <property type="project" value="UniProtKB"/>
</dbReference>
<dbReference type="GO" id="GO:0006509">
    <property type="term" value="P:membrane protein ectodomain proteolysis"/>
    <property type="evidence" value="ECO:0000250"/>
    <property type="project" value="UniProtKB"/>
</dbReference>
<dbReference type="GO" id="GO:0006397">
    <property type="term" value="P:mRNA processing"/>
    <property type="evidence" value="ECO:0007669"/>
    <property type="project" value="UniProtKB-KW"/>
</dbReference>
<dbReference type="GO" id="GO:0048025">
    <property type="term" value="P:negative regulation of mRNA splicing, via spliceosome"/>
    <property type="evidence" value="ECO:0000250"/>
    <property type="project" value="UniProtKB"/>
</dbReference>
<dbReference type="GO" id="GO:0048026">
    <property type="term" value="P:positive regulation of mRNA splicing, via spliceosome"/>
    <property type="evidence" value="ECO:0000250"/>
    <property type="project" value="UniProtKB"/>
</dbReference>
<dbReference type="GO" id="GO:0045944">
    <property type="term" value="P:positive regulation of transcription by RNA polymerase II"/>
    <property type="evidence" value="ECO:0000250"/>
    <property type="project" value="UniProtKB"/>
</dbReference>
<dbReference type="GO" id="GO:0051260">
    <property type="term" value="P:protein homooligomerization"/>
    <property type="evidence" value="ECO:0000250"/>
    <property type="project" value="UniProtKB"/>
</dbReference>
<dbReference type="GO" id="GO:0000381">
    <property type="term" value="P:regulation of alternative mRNA splicing, via spliceosome"/>
    <property type="evidence" value="ECO:0000250"/>
    <property type="project" value="UniProtKB"/>
</dbReference>
<dbReference type="GO" id="GO:0008380">
    <property type="term" value="P:RNA splicing"/>
    <property type="evidence" value="ECO:0007669"/>
    <property type="project" value="UniProtKB-KW"/>
</dbReference>
<dbReference type="GO" id="GO:0006366">
    <property type="term" value="P:transcription by RNA polymerase II"/>
    <property type="evidence" value="ECO:0000250"/>
    <property type="project" value="UniProtKB"/>
</dbReference>
<dbReference type="CDD" id="cd12382">
    <property type="entry name" value="RRM_RBMX_like"/>
    <property type="match status" value="1"/>
</dbReference>
<dbReference type="FunFam" id="3.30.70.330:FF:000119">
    <property type="entry name" value="RNA-binding motif protein, X chromosome"/>
    <property type="match status" value="1"/>
</dbReference>
<dbReference type="Gene3D" id="3.30.70.330">
    <property type="match status" value="1"/>
</dbReference>
<dbReference type="InterPro" id="IPR012677">
    <property type="entry name" value="Nucleotide-bd_a/b_plait_sf"/>
</dbReference>
<dbReference type="InterPro" id="IPR035979">
    <property type="entry name" value="RBD_domain_sf"/>
</dbReference>
<dbReference type="InterPro" id="IPR050441">
    <property type="entry name" value="RBM"/>
</dbReference>
<dbReference type="InterPro" id="IPR012604">
    <property type="entry name" value="RBM1CTR"/>
</dbReference>
<dbReference type="InterPro" id="IPR000504">
    <property type="entry name" value="RRM_dom"/>
</dbReference>
<dbReference type="InterPro" id="IPR003954">
    <property type="entry name" value="RRM_dom_euk"/>
</dbReference>
<dbReference type="PANTHER" id="PTHR48034">
    <property type="entry name" value="TRANSFORMER-2 SEX-DETERMINING PROTEIN-RELATED"/>
    <property type="match status" value="1"/>
</dbReference>
<dbReference type="Pfam" id="PF08081">
    <property type="entry name" value="RBM1CTR"/>
    <property type="match status" value="1"/>
</dbReference>
<dbReference type="Pfam" id="PF00076">
    <property type="entry name" value="RRM_1"/>
    <property type="match status" value="1"/>
</dbReference>
<dbReference type="SMART" id="SM00360">
    <property type="entry name" value="RRM"/>
    <property type="match status" value="1"/>
</dbReference>
<dbReference type="SMART" id="SM00361">
    <property type="entry name" value="RRM_1"/>
    <property type="match status" value="1"/>
</dbReference>
<dbReference type="SUPFAM" id="SSF54928">
    <property type="entry name" value="RNA-binding domain, RBD"/>
    <property type="match status" value="1"/>
</dbReference>
<dbReference type="PROSITE" id="PS50102">
    <property type="entry name" value="RRM"/>
    <property type="match status" value="1"/>
</dbReference>
<evidence type="ECO:0000250" key="1"/>
<evidence type="ECO:0000250" key="2">
    <source>
        <dbReference type="UniProtKB" id="P38159"/>
    </source>
</evidence>
<evidence type="ECO:0000250" key="3">
    <source>
        <dbReference type="UniProtKB" id="Q9WV02"/>
    </source>
</evidence>
<evidence type="ECO:0000255" key="4">
    <source>
        <dbReference type="PROSITE-ProRule" id="PRU00176"/>
    </source>
</evidence>
<evidence type="ECO:0000256" key="5">
    <source>
        <dbReference type="SAM" id="MobiDB-lite"/>
    </source>
</evidence>
<keyword id="KW-0007">Acetylation</keyword>
<keyword id="KW-0010">Activator</keyword>
<keyword id="KW-0325">Glycoprotein</keyword>
<keyword id="KW-1017">Isopeptide bond</keyword>
<keyword id="KW-0488">Methylation</keyword>
<keyword id="KW-0507">mRNA processing</keyword>
<keyword id="KW-0508">mRNA splicing</keyword>
<keyword id="KW-0539">Nucleus</keyword>
<keyword id="KW-0597">Phosphoprotein</keyword>
<keyword id="KW-1185">Reference proteome</keyword>
<keyword id="KW-0678">Repressor</keyword>
<keyword id="KW-0687">Ribonucleoprotein</keyword>
<keyword id="KW-0694">RNA-binding</keyword>
<keyword id="KW-0747">Spliceosome</keyword>
<keyword id="KW-0043">Tumor suppressor</keyword>
<keyword id="KW-0832">Ubl conjugation</keyword>
<organism>
    <name type="scientific">Macaca fascicularis</name>
    <name type="common">Crab-eating macaque</name>
    <name type="synonym">Cynomolgus monkey</name>
    <dbReference type="NCBI Taxonomy" id="9541"/>
    <lineage>
        <taxon>Eukaryota</taxon>
        <taxon>Metazoa</taxon>
        <taxon>Chordata</taxon>
        <taxon>Craniata</taxon>
        <taxon>Vertebrata</taxon>
        <taxon>Euteleostomi</taxon>
        <taxon>Mammalia</taxon>
        <taxon>Eutheria</taxon>
        <taxon>Euarchontoglires</taxon>
        <taxon>Primates</taxon>
        <taxon>Haplorrhini</taxon>
        <taxon>Catarrhini</taxon>
        <taxon>Cercopithecidae</taxon>
        <taxon>Cercopithecinae</taxon>
        <taxon>Macaca</taxon>
    </lineage>
</organism>
<reference key="1">
    <citation type="submission" date="2005-06" db="EMBL/GenBank/DDBJ databases">
        <title>DNA sequences of macaque genes expressed in brain or testis and its evolutionary implications.</title>
        <authorList>
            <consortium name="International consortium for macaque cDNA sequencing and analysis"/>
        </authorList>
    </citation>
    <scope>NUCLEOTIDE SEQUENCE [LARGE SCALE MRNA]</scope>
</reference>
<sequence length="391" mass="42318">MVEADRPGKLFIGGLNTETNEKALEAVFGKYGRIVEVLLMKDRETNKSRGFAFVTFESPADAKDAARDMNGKSLDGKAIKVEQATKPSFESGRRGPPPPPRSRGPPRGLRGGRGGSGGTRGPPSRGGHMDDGGYSMNFNMSSSRGPLPVKRGPPPRSGGPPPKRSAPSGPVRSSSGMGGRAPVSRGRDSYGGPPRREPLPSRRDVYLSPRDDGYSTKDSYSSRDYPSSRDTRDYAPPPRDYTYRDYGHSSSRDDYPSRGYSDRDGYGRDRDYSDHPSGGSYRDSYESYGNSRSAPPTRGPPPSYGGSSRYDDYSSSRDGYGGSRDSYSSSRSDLYSSGRDRVGRQDRGLPPSMERGYPPPRDSYSSSSRGAPRGGGRGGSRSDRGGGRSRY</sequence>
<proteinExistence type="evidence at transcript level"/>
<comment type="function">
    <text evidence="1">RNA-binding protein that plays several role in the regulation of pre- and post-transcriptional processes. Implicated in tissue-specific regulation of gene transcription and alternative splicing of several pre-mRNAs. Binds to and stimulates transcription from the tumor suppressor TXNIP gene promoter; may thus be involved in tumor suppression. When associated with SAFB, binds to and stimulates transcription from the SREBF1 promoter. Associates with nascent mRNAs transcribed by RNA polymerase II. Component of the supraspliceosome complex that regulates pre-mRNA alternative splice site selection. Can either activate or suppress exon inclusion; acts additively with TRA2B to promote exon 7 inclusion of the survival motor neuron SMN. Represses the splicing of MAPT/Tau exon 10. Binds preferentially to single-stranded 5'-CC[A/C]-rich RNA sequence motifs localized in a single-stranded conformation; probably binds RNA as a homodimer. Binds non-specifically to pre-mRNAs. Also plays a role in the cytoplasmic TNFR1 trafficking pathways; promotes both the IL-1-beta-mediated inducible proteolytic cleavage of TNFR1 ectodomains and the release of TNFR1 exosome-like vesicles to the extracellular compartment (By similarity).</text>
</comment>
<comment type="subunit">
    <text evidence="2 3">Homomultimer. Found in the supraspliceosome complex. Identified in the spliceosome C complex. Forms a complex with ILF2, ILF3, YLPM1, KHDRBS1, NCOA5 and PPP1CA. Interacts with CLK2, KHDRBS2, KHDRBS3, SAFB/SAFB1, TRA2B and YTHDC1. Interacts with ERAP1; the interaction is RNA-independent (By similarity). Interacts with PPIA/CYPA (By similarity).</text>
</comment>
<comment type="subcellular location">
    <subcellularLocation>
        <location evidence="1">Nucleus</location>
    </subcellularLocation>
    <text evidence="1">Component of ribonucleosomes. Localizes in numerous small granules in the nucleus (By similarity).</text>
</comment>
<comment type="domain">
    <text evidence="1">The RRM domain is necessary for RNA-binding, but not for splice site selection, indicating that its splicing activity does not require direct binding to RNA.</text>
</comment>
<comment type="PTM">
    <text evidence="1">O-glycosylated.</text>
</comment>
<comment type="PTM">
    <text evidence="1">Arg-185 is dimethylated, probably to asymmetric dimethylarginine.</text>
</comment>
<feature type="chain" id="PRO_0000413018" description="RNA-binding motif protein, X chromosome">
    <location>
        <begin position="1"/>
        <end position="391"/>
    </location>
</feature>
<feature type="initiator methionine" description="Removed; alternate" evidence="2">
    <location>
        <position position="1"/>
    </location>
</feature>
<feature type="chain" id="PRO_0000413019" description="RNA-binding motif protein, X chromosome, N-terminally processed">
    <location>
        <begin position="2"/>
        <end position="391"/>
    </location>
</feature>
<feature type="domain" description="RRM" evidence="4">
    <location>
        <begin position="8"/>
        <end position="86"/>
    </location>
</feature>
<feature type="region of interest" description="Disordered" evidence="5">
    <location>
        <begin position="61"/>
        <end position="391"/>
    </location>
</feature>
<feature type="region of interest" description="Necessary for the association to nascent RNAPII transcripts and nuclear localization" evidence="1">
    <location>
        <begin position="186"/>
        <end position="236"/>
    </location>
</feature>
<feature type="region of interest" description="Necessary for RNA-binding" evidence="1">
    <location>
        <begin position="333"/>
        <end position="391"/>
    </location>
</feature>
<feature type="compositionally biased region" description="Basic and acidic residues" evidence="5">
    <location>
        <begin position="61"/>
        <end position="80"/>
    </location>
</feature>
<feature type="compositionally biased region" description="Gly residues" evidence="5">
    <location>
        <begin position="109"/>
        <end position="120"/>
    </location>
</feature>
<feature type="compositionally biased region" description="Pro residues" evidence="5">
    <location>
        <begin position="151"/>
        <end position="164"/>
    </location>
</feature>
<feature type="compositionally biased region" description="Basic and acidic residues" evidence="5">
    <location>
        <begin position="194"/>
        <end position="215"/>
    </location>
</feature>
<feature type="compositionally biased region" description="Basic and acidic residues" evidence="5">
    <location>
        <begin position="241"/>
        <end position="274"/>
    </location>
</feature>
<feature type="compositionally biased region" description="Low complexity" evidence="5">
    <location>
        <begin position="323"/>
        <end position="337"/>
    </location>
</feature>
<feature type="compositionally biased region" description="Basic and acidic residues" evidence="5">
    <location>
        <begin position="338"/>
        <end position="347"/>
    </location>
</feature>
<feature type="compositionally biased region" description="Low complexity" evidence="5">
    <location>
        <begin position="362"/>
        <end position="371"/>
    </location>
</feature>
<feature type="compositionally biased region" description="Basic and acidic residues" evidence="5">
    <location>
        <begin position="380"/>
        <end position="391"/>
    </location>
</feature>
<feature type="modified residue" description="N-acetylmethionine; in Heterogeneous nuclear ribonucleoprotein G; alternate" evidence="2">
    <location>
        <position position="1"/>
    </location>
</feature>
<feature type="modified residue" description="N-acetylvaline; in Heterogeneous nuclear ribonucleoprotein G, N-terminally processed" evidence="2">
    <location>
        <position position="2"/>
    </location>
</feature>
<feature type="modified residue" description="N6-acetyllysine" evidence="2">
    <location>
        <position position="30"/>
    </location>
</feature>
<feature type="modified residue" description="Phosphoserine" evidence="2">
    <location>
        <position position="88"/>
    </location>
</feature>
<feature type="modified residue" description="Phosphoserine" evidence="2">
    <location>
        <position position="91"/>
    </location>
</feature>
<feature type="modified residue" description="Omega-N-methylarginine" evidence="3">
    <location>
        <position position="125"/>
    </location>
</feature>
<feature type="modified residue" description="Omega-N-methylarginine" evidence="3">
    <location>
        <position position="144"/>
    </location>
</feature>
<feature type="modified residue" description="Omega-N-methylarginine" evidence="3">
    <location>
        <position position="164"/>
    </location>
</feature>
<feature type="modified residue" description="Phosphoserine" evidence="2">
    <location>
        <position position="165"/>
    </location>
</feature>
<feature type="modified residue" description="Omega-N-methylarginine" evidence="3">
    <location>
        <position position="172"/>
    </location>
</feature>
<feature type="modified residue" description="Phosphoserine" evidence="2">
    <location>
        <position position="174"/>
    </location>
</feature>
<feature type="modified residue" description="Phosphoserine" evidence="2">
    <location>
        <position position="261"/>
    </location>
</feature>
<feature type="modified residue" description="Phosphoserine" evidence="2">
    <location>
        <position position="328"/>
    </location>
</feature>
<feature type="modified residue" description="Phosphoserine" evidence="2">
    <location>
        <position position="329"/>
    </location>
</feature>
<feature type="modified residue" description="Phosphoserine" evidence="2">
    <location>
        <position position="330"/>
    </location>
</feature>
<feature type="modified residue" description="Phosphoserine" evidence="2">
    <location>
        <position position="332"/>
    </location>
</feature>
<feature type="modified residue" description="Phosphoserine" evidence="2">
    <location>
        <position position="352"/>
    </location>
</feature>
<feature type="cross-link" description="Glycyl lysine isopeptide (Lys-Gly) (interchain with G-Cter in SUMO2)" evidence="2">
    <location>
        <position position="22"/>
    </location>
</feature>
<feature type="cross-link" description="Glycyl lysine isopeptide (Lys-Gly) (interchain with G-Cter in SUMO2)" evidence="2">
    <location>
        <position position="80"/>
    </location>
</feature>
<feature type="cross-link" description="Glycyl lysine isopeptide (Lys-Gly) (interchain with G-Cter in SUMO2)" evidence="2">
    <location>
        <position position="86"/>
    </location>
</feature>
<accession>Q4R7F0</accession>